<reference key="1">
    <citation type="journal article" date="2006" name="Nat. Biotechnol.">
        <title>Genome sequence of the ubiquitous hydrocarbon-degrading marine bacterium Alcanivorax borkumensis.</title>
        <authorList>
            <person name="Schneiker S."/>
            <person name="Martins dos Santos V.A.P."/>
            <person name="Bartels D."/>
            <person name="Bekel T."/>
            <person name="Brecht M."/>
            <person name="Buhrmester J."/>
            <person name="Chernikova T.N."/>
            <person name="Denaro R."/>
            <person name="Ferrer M."/>
            <person name="Gertler C."/>
            <person name="Goesmann A."/>
            <person name="Golyshina O.V."/>
            <person name="Kaminski F."/>
            <person name="Khachane A.N."/>
            <person name="Lang S."/>
            <person name="Linke B."/>
            <person name="McHardy A.C."/>
            <person name="Meyer F."/>
            <person name="Nechitaylo T."/>
            <person name="Puehler A."/>
            <person name="Regenhardt D."/>
            <person name="Rupp O."/>
            <person name="Sabirova J.S."/>
            <person name="Selbitschka W."/>
            <person name="Yakimov M.M."/>
            <person name="Timmis K.N."/>
            <person name="Vorhoelter F.-J."/>
            <person name="Weidner S."/>
            <person name="Kaiser O."/>
            <person name="Golyshin P.N."/>
        </authorList>
    </citation>
    <scope>NUCLEOTIDE SEQUENCE [LARGE SCALE GENOMIC DNA]</scope>
    <source>
        <strain>ATCC 700651 / DSM 11573 / NCIMB 13689 / SK2</strain>
    </source>
</reference>
<protein>
    <recommendedName>
        <fullName evidence="1">Ribosomal RNA large subunit methyltransferase K/L</fullName>
    </recommendedName>
    <domain>
        <recommendedName>
            <fullName evidence="1">23S rRNA m2G2445 methyltransferase</fullName>
            <ecNumber evidence="1">2.1.1.173</ecNumber>
        </recommendedName>
        <alternativeName>
            <fullName evidence="1">rRNA (guanine-N(2)-)-methyltransferase RlmL</fullName>
        </alternativeName>
    </domain>
    <domain>
        <recommendedName>
            <fullName evidence="1">23S rRNA m7G2069 methyltransferase</fullName>
            <ecNumber evidence="1">2.1.1.264</ecNumber>
        </recommendedName>
        <alternativeName>
            <fullName evidence="1">rRNA (guanine-N(7)-)-methyltransferase RlmK</fullName>
        </alternativeName>
    </domain>
</protein>
<comment type="function">
    <text evidence="1">Specifically methylates the guanine in position 2445 (m2G2445) and the guanine in position 2069 (m7G2069) of 23S rRNA.</text>
</comment>
<comment type="catalytic activity">
    <reaction evidence="1">
        <text>guanosine(2445) in 23S rRNA + S-adenosyl-L-methionine = N(2)-methylguanosine(2445) in 23S rRNA + S-adenosyl-L-homocysteine + H(+)</text>
        <dbReference type="Rhea" id="RHEA:42740"/>
        <dbReference type="Rhea" id="RHEA-COMP:10215"/>
        <dbReference type="Rhea" id="RHEA-COMP:10216"/>
        <dbReference type="ChEBI" id="CHEBI:15378"/>
        <dbReference type="ChEBI" id="CHEBI:57856"/>
        <dbReference type="ChEBI" id="CHEBI:59789"/>
        <dbReference type="ChEBI" id="CHEBI:74269"/>
        <dbReference type="ChEBI" id="CHEBI:74481"/>
        <dbReference type="EC" id="2.1.1.173"/>
    </reaction>
</comment>
<comment type="catalytic activity">
    <reaction evidence="1">
        <text>guanosine(2069) in 23S rRNA + S-adenosyl-L-methionine = N(2)-methylguanosine(2069) in 23S rRNA + S-adenosyl-L-homocysteine + H(+)</text>
        <dbReference type="Rhea" id="RHEA:43772"/>
        <dbReference type="Rhea" id="RHEA-COMP:10688"/>
        <dbReference type="Rhea" id="RHEA-COMP:10689"/>
        <dbReference type="ChEBI" id="CHEBI:15378"/>
        <dbReference type="ChEBI" id="CHEBI:57856"/>
        <dbReference type="ChEBI" id="CHEBI:59789"/>
        <dbReference type="ChEBI" id="CHEBI:74269"/>
        <dbReference type="ChEBI" id="CHEBI:74481"/>
        <dbReference type="EC" id="2.1.1.264"/>
    </reaction>
</comment>
<comment type="subcellular location">
    <subcellularLocation>
        <location evidence="1">Cytoplasm</location>
    </subcellularLocation>
</comment>
<comment type="similarity">
    <text evidence="1">Belongs to the methyltransferase superfamily. RlmKL family.</text>
</comment>
<proteinExistence type="inferred from homology"/>
<evidence type="ECO:0000255" key="1">
    <source>
        <dbReference type="HAMAP-Rule" id="MF_01858"/>
    </source>
</evidence>
<organism>
    <name type="scientific">Alcanivorax borkumensis (strain ATCC 700651 / DSM 11573 / NCIMB 13689 / SK2)</name>
    <dbReference type="NCBI Taxonomy" id="393595"/>
    <lineage>
        <taxon>Bacteria</taxon>
        <taxon>Pseudomonadati</taxon>
        <taxon>Pseudomonadota</taxon>
        <taxon>Gammaproteobacteria</taxon>
        <taxon>Oceanospirillales</taxon>
        <taxon>Alcanivoracaceae</taxon>
        <taxon>Alcanivorax</taxon>
    </lineage>
</organism>
<keyword id="KW-0963">Cytoplasm</keyword>
<keyword id="KW-0489">Methyltransferase</keyword>
<keyword id="KW-1185">Reference proteome</keyword>
<keyword id="KW-0698">rRNA processing</keyword>
<keyword id="KW-0949">S-adenosyl-L-methionine</keyword>
<keyword id="KW-0808">Transferase</keyword>
<gene>
    <name evidence="1" type="primary">rlmL</name>
    <name type="ordered locus">ABO_1005</name>
</gene>
<sequence length="704" mass="79404">MEFVATCMPGLADLLSDELGSLGISVTETGRAHVSFSGGVADALKVCLWSRLSERVLLHLATLGVTPDIAPEKLAASQDWLSLVGNNAPVHLHIEHGAEVRGDNRISAKRFIHALPEQFAISREPKGSCCIRARLDLNEAHLWLDLAGEPLHRRGYRLAGGRAPLRETLAAAILWAVGWGKEGRHSALIDPFCGSGTLVIEAALIAAGRAAGAQRQHYGFQQWRGCRRQLWLDAQKEAGESGKRPVPAVSLKGFDSEASTLQLALQNAERAGVRNAIHFERRELGALRRRDFVDNGIVVGNPPWGERLEEKPQAGWLHYALGRILSVRAPGYQALLLGADAEVMDRSGMNLEQQWRLKNGPFNNFIRLYSPRKQTPANVVKVADDSAFNVPEGAQPLLNRLRKNGKHLRRWLEREDIQCYRLYDRDLPEFNVAVDIYADQVLVQEFKAPKTIDPEKAKERRDWAVTAVRAALGVHREQVHLRTREKQKGNQQYQKLDAQGQYRVVREGQSQLLINLQDYLDTGLFLDHRPTRLRIAEEASGKRFLNLFAYTGSATVHAAVGGAKRTVTVDSSKRYLDWAACNLAANGFSTDQHELARADTMRWLDECKEQFDLVFCDPPTFSNNKSRSDFVVEEHHGDLIRKIMRCLEPGGVLYFSCNYRRFQMDESISKWYAVEDISRWSIPEDFRRNEKIHYCYAIRHVEDA</sequence>
<name>RLMKL_ALCBS</name>
<dbReference type="EC" id="2.1.1.173" evidence="1"/>
<dbReference type="EC" id="2.1.1.264" evidence="1"/>
<dbReference type="EMBL" id="AM286690">
    <property type="protein sequence ID" value="CAL16453.1"/>
    <property type="molecule type" value="Genomic_DNA"/>
</dbReference>
<dbReference type="RefSeq" id="WP_011588289.1">
    <property type="nucleotide sequence ID" value="NC_008260.1"/>
</dbReference>
<dbReference type="SMR" id="Q0VQU5"/>
<dbReference type="STRING" id="393595.ABO_1005"/>
<dbReference type="KEGG" id="abo:ABO_1005"/>
<dbReference type="eggNOG" id="COG0116">
    <property type="taxonomic scope" value="Bacteria"/>
</dbReference>
<dbReference type="eggNOG" id="COG1092">
    <property type="taxonomic scope" value="Bacteria"/>
</dbReference>
<dbReference type="HOGENOM" id="CLU_014042_2_0_6"/>
<dbReference type="OrthoDB" id="9809404at2"/>
<dbReference type="Proteomes" id="UP000008871">
    <property type="component" value="Chromosome"/>
</dbReference>
<dbReference type="GO" id="GO:0005737">
    <property type="term" value="C:cytoplasm"/>
    <property type="evidence" value="ECO:0007669"/>
    <property type="project" value="UniProtKB-SubCell"/>
</dbReference>
<dbReference type="GO" id="GO:0052915">
    <property type="term" value="F:23S rRNA (guanine(2445)-N(2))-methyltransferase activity"/>
    <property type="evidence" value="ECO:0007669"/>
    <property type="project" value="UniProtKB-UniRule"/>
</dbReference>
<dbReference type="GO" id="GO:0003676">
    <property type="term" value="F:nucleic acid binding"/>
    <property type="evidence" value="ECO:0007669"/>
    <property type="project" value="InterPro"/>
</dbReference>
<dbReference type="GO" id="GO:0070043">
    <property type="term" value="F:rRNA (guanine-N7-)-methyltransferase activity"/>
    <property type="evidence" value="ECO:0007669"/>
    <property type="project" value="UniProtKB-UniRule"/>
</dbReference>
<dbReference type="CDD" id="cd02440">
    <property type="entry name" value="AdoMet_MTases"/>
    <property type="match status" value="1"/>
</dbReference>
<dbReference type="CDD" id="cd11715">
    <property type="entry name" value="THUMP_AdoMetMT"/>
    <property type="match status" value="1"/>
</dbReference>
<dbReference type="Gene3D" id="3.30.2130.30">
    <property type="match status" value="1"/>
</dbReference>
<dbReference type="Gene3D" id="3.30.750.80">
    <property type="entry name" value="RNA methyltransferase domain (HRMD) like"/>
    <property type="match status" value="1"/>
</dbReference>
<dbReference type="Gene3D" id="3.40.50.150">
    <property type="entry name" value="Vaccinia Virus protein VP39"/>
    <property type="match status" value="2"/>
</dbReference>
<dbReference type="HAMAP" id="MF_01858">
    <property type="entry name" value="23SrRNA_methyltr_KL"/>
    <property type="match status" value="1"/>
</dbReference>
<dbReference type="InterPro" id="IPR017244">
    <property type="entry name" value="23SrRNA_methyltr_KL"/>
</dbReference>
<dbReference type="InterPro" id="IPR002052">
    <property type="entry name" value="DNA_methylase_N6_adenine_CS"/>
</dbReference>
<dbReference type="InterPro" id="IPR000241">
    <property type="entry name" value="RlmKL-like_Mtase"/>
</dbReference>
<dbReference type="InterPro" id="IPR053943">
    <property type="entry name" value="RlmKL-like_Mtase_CS"/>
</dbReference>
<dbReference type="InterPro" id="IPR054170">
    <property type="entry name" value="RlmL_1st"/>
</dbReference>
<dbReference type="InterPro" id="IPR019614">
    <property type="entry name" value="SAM-dep_methyl-trfase"/>
</dbReference>
<dbReference type="InterPro" id="IPR029063">
    <property type="entry name" value="SAM-dependent_MTases_sf"/>
</dbReference>
<dbReference type="NCBIfam" id="NF008748">
    <property type="entry name" value="PRK11783.1"/>
    <property type="match status" value="1"/>
</dbReference>
<dbReference type="PANTHER" id="PTHR47313">
    <property type="entry name" value="RIBOSOMAL RNA LARGE SUBUNIT METHYLTRANSFERASE K/L"/>
    <property type="match status" value="1"/>
</dbReference>
<dbReference type="PANTHER" id="PTHR47313:SF1">
    <property type="entry name" value="RIBOSOMAL RNA LARGE SUBUNIT METHYLTRANSFERASE K_L"/>
    <property type="match status" value="1"/>
</dbReference>
<dbReference type="Pfam" id="PF10672">
    <property type="entry name" value="Methyltrans_SAM"/>
    <property type="match status" value="1"/>
</dbReference>
<dbReference type="Pfam" id="PF22020">
    <property type="entry name" value="RlmL_1st"/>
    <property type="match status" value="1"/>
</dbReference>
<dbReference type="Pfam" id="PF01170">
    <property type="entry name" value="UPF0020"/>
    <property type="match status" value="1"/>
</dbReference>
<dbReference type="PIRSF" id="PIRSF037618">
    <property type="entry name" value="RNA_Mtase_bacteria_prd"/>
    <property type="match status" value="1"/>
</dbReference>
<dbReference type="SUPFAM" id="SSF53335">
    <property type="entry name" value="S-adenosyl-L-methionine-dependent methyltransferases"/>
    <property type="match status" value="2"/>
</dbReference>
<dbReference type="PROSITE" id="PS01261">
    <property type="entry name" value="UPF0020"/>
    <property type="match status" value="1"/>
</dbReference>
<accession>Q0VQU5</accession>
<feature type="chain" id="PRO_0000366724" description="Ribosomal RNA large subunit methyltransferase K/L">
    <location>
        <begin position="1"/>
        <end position="704"/>
    </location>
</feature>